<feature type="chain" id="PRO_1000201671" description="Adenine phosphoribosyltransferase">
    <location>
        <begin position="1"/>
        <end position="185"/>
    </location>
</feature>
<evidence type="ECO:0000255" key="1">
    <source>
        <dbReference type="HAMAP-Rule" id="MF_00004"/>
    </source>
</evidence>
<dbReference type="EC" id="2.4.2.7" evidence="1"/>
<dbReference type="EMBL" id="CP001657">
    <property type="protein sequence ID" value="ACT12124.1"/>
    <property type="molecule type" value="Genomic_DNA"/>
</dbReference>
<dbReference type="SMR" id="C6DB82"/>
<dbReference type="STRING" id="561230.PC1_1075"/>
<dbReference type="KEGG" id="pct:PC1_1075"/>
<dbReference type="eggNOG" id="COG0503">
    <property type="taxonomic scope" value="Bacteria"/>
</dbReference>
<dbReference type="HOGENOM" id="CLU_063339_3_0_6"/>
<dbReference type="UniPathway" id="UPA00588">
    <property type="reaction ID" value="UER00646"/>
</dbReference>
<dbReference type="Proteomes" id="UP000002736">
    <property type="component" value="Chromosome"/>
</dbReference>
<dbReference type="GO" id="GO:0005737">
    <property type="term" value="C:cytoplasm"/>
    <property type="evidence" value="ECO:0007669"/>
    <property type="project" value="UniProtKB-SubCell"/>
</dbReference>
<dbReference type="GO" id="GO:0002055">
    <property type="term" value="F:adenine binding"/>
    <property type="evidence" value="ECO:0007669"/>
    <property type="project" value="TreeGrafter"/>
</dbReference>
<dbReference type="GO" id="GO:0003999">
    <property type="term" value="F:adenine phosphoribosyltransferase activity"/>
    <property type="evidence" value="ECO:0007669"/>
    <property type="project" value="UniProtKB-UniRule"/>
</dbReference>
<dbReference type="GO" id="GO:0016208">
    <property type="term" value="F:AMP binding"/>
    <property type="evidence" value="ECO:0007669"/>
    <property type="project" value="TreeGrafter"/>
</dbReference>
<dbReference type="GO" id="GO:0006168">
    <property type="term" value="P:adenine salvage"/>
    <property type="evidence" value="ECO:0007669"/>
    <property type="project" value="InterPro"/>
</dbReference>
<dbReference type="GO" id="GO:0044209">
    <property type="term" value="P:AMP salvage"/>
    <property type="evidence" value="ECO:0007669"/>
    <property type="project" value="UniProtKB-UniRule"/>
</dbReference>
<dbReference type="GO" id="GO:0006166">
    <property type="term" value="P:purine ribonucleoside salvage"/>
    <property type="evidence" value="ECO:0007669"/>
    <property type="project" value="UniProtKB-KW"/>
</dbReference>
<dbReference type="CDD" id="cd06223">
    <property type="entry name" value="PRTases_typeI"/>
    <property type="match status" value="1"/>
</dbReference>
<dbReference type="FunFam" id="3.40.50.2020:FF:000004">
    <property type="entry name" value="Adenine phosphoribosyltransferase"/>
    <property type="match status" value="1"/>
</dbReference>
<dbReference type="Gene3D" id="3.40.50.2020">
    <property type="match status" value="1"/>
</dbReference>
<dbReference type="HAMAP" id="MF_00004">
    <property type="entry name" value="Aden_phosphoribosyltr"/>
    <property type="match status" value="1"/>
</dbReference>
<dbReference type="InterPro" id="IPR005764">
    <property type="entry name" value="Ade_phspho_trans"/>
</dbReference>
<dbReference type="InterPro" id="IPR000836">
    <property type="entry name" value="PRibTrfase_dom"/>
</dbReference>
<dbReference type="InterPro" id="IPR029057">
    <property type="entry name" value="PRTase-like"/>
</dbReference>
<dbReference type="InterPro" id="IPR050054">
    <property type="entry name" value="UPRTase/APRTase"/>
</dbReference>
<dbReference type="NCBIfam" id="TIGR01090">
    <property type="entry name" value="apt"/>
    <property type="match status" value="1"/>
</dbReference>
<dbReference type="NCBIfam" id="NF002632">
    <property type="entry name" value="PRK02304.1-1"/>
    <property type="match status" value="1"/>
</dbReference>
<dbReference type="NCBIfam" id="NF002634">
    <property type="entry name" value="PRK02304.1-3"/>
    <property type="match status" value="1"/>
</dbReference>
<dbReference type="NCBIfam" id="NF002636">
    <property type="entry name" value="PRK02304.1-5"/>
    <property type="match status" value="1"/>
</dbReference>
<dbReference type="PANTHER" id="PTHR32315">
    <property type="entry name" value="ADENINE PHOSPHORIBOSYLTRANSFERASE"/>
    <property type="match status" value="1"/>
</dbReference>
<dbReference type="PANTHER" id="PTHR32315:SF3">
    <property type="entry name" value="ADENINE PHOSPHORIBOSYLTRANSFERASE"/>
    <property type="match status" value="1"/>
</dbReference>
<dbReference type="Pfam" id="PF00156">
    <property type="entry name" value="Pribosyltran"/>
    <property type="match status" value="1"/>
</dbReference>
<dbReference type="SUPFAM" id="SSF53271">
    <property type="entry name" value="PRTase-like"/>
    <property type="match status" value="1"/>
</dbReference>
<dbReference type="PROSITE" id="PS00103">
    <property type="entry name" value="PUR_PYR_PR_TRANSFER"/>
    <property type="match status" value="1"/>
</dbReference>
<accession>C6DB82</accession>
<reference key="1">
    <citation type="submission" date="2009-07" db="EMBL/GenBank/DDBJ databases">
        <title>Complete sequence of Pectobacterium carotovorum subsp. carotovorum PC1.</title>
        <authorList>
            <consortium name="US DOE Joint Genome Institute"/>
            <person name="Lucas S."/>
            <person name="Copeland A."/>
            <person name="Lapidus A."/>
            <person name="Glavina del Rio T."/>
            <person name="Tice H."/>
            <person name="Bruce D."/>
            <person name="Goodwin L."/>
            <person name="Pitluck S."/>
            <person name="Munk A.C."/>
            <person name="Brettin T."/>
            <person name="Detter J.C."/>
            <person name="Han C."/>
            <person name="Tapia R."/>
            <person name="Larimer F."/>
            <person name="Land M."/>
            <person name="Hauser L."/>
            <person name="Kyrpides N."/>
            <person name="Mikhailova N."/>
            <person name="Balakrishnan V."/>
            <person name="Glasner J."/>
            <person name="Perna N.T."/>
        </authorList>
    </citation>
    <scope>NUCLEOTIDE SEQUENCE [LARGE SCALE GENOMIC DNA]</scope>
    <source>
        <strain>PC1</strain>
    </source>
</reference>
<sequence>MMTVTAQQQAELIKNSIKSIPDYPKPGILFRDVTSLLEDPVAYAASIEMLANRYRNSGVTKVVGTEARGFLFGAPVALALGVGFVPVRKPGKLPRPTISESYELEYGSDTLEIHSDAISAGDNVLVIDDLLATGGTLEATVKLIRRLGGTVNDAAFIINLFDLGGEQRLTGMGVTCYSLVDFPGH</sequence>
<gene>
    <name evidence="1" type="primary">apt</name>
    <name type="ordered locus">PC1_1075</name>
</gene>
<organism>
    <name type="scientific">Pectobacterium carotovorum subsp. carotovorum (strain PC1)</name>
    <dbReference type="NCBI Taxonomy" id="561230"/>
    <lineage>
        <taxon>Bacteria</taxon>
        <taxon>Pseudomonadati</taxon>
        <taxon>Pseudomonadota</taxon>
        <taxon>Gammaproteobacteria</taxon>
        <taxon>Enterobacterales</taxon>
        <taxon>Pectobacteriaceae</taxon>
        <taxon>Pectobacterium</taxon>
    </lineage>
</organism>
<name>APT_PECCP</name>
<protein>
    <recommendedName>
        <fullName evidence="1">Adenine phosphoribosyltransferase</fullName>
        <shortName evidence="1">APRT</shortName>
        <ecNumber evidence="1">2.4.2.7</ecNumber>
    </recommendedName>
</protein>
<proteinExistence type="inferred from homology"/>
<keyword id="KW-0963">Cytoplasm</keyword>
<keyword id="KW-0328">Glycosyltransferase</keyword>
<keyword id="KW-0660">Purine salvage</keyword>
<keyword id="KW-0808">Transferase</keyword>
<comment type="function">
    <text evidence="1">Catalyzes a salvage reaction resulting in the formation of AMP, that is energically less costly than de novo synthesis.</text>
</comment>
<comment type="catalytic activity">
    <reaction evidence="1">
        <text>AMP + diphosphate = 5-phospho-alpha-D-ribose 1-diphosphate + adenine</text>
        <dbReference type="Rhea" id="RHEA:16609"/>
        <dbReference type="ChEBI" id="CHEBI:16708"/>
        <dbReference type="ChEBI" id="CHEBI:33019"/>
        <dbReference type="ChEBI" id="CHEBI:58017"/>
        <dbReference type="ChEBI" id="CHEBI:456215"/>
        <dbReference type="EC" id="2.4.2.7"/>
    </reaction>
</comment>
<comment type="pathway">
    <text evidence="1">Purine metabolism; AMP biosynthesis via salvage pathway; AMP from adenine: step 1/1.</text>
</comment>
<comment type="subunit">
    <text evidence="1">Homodimer.</text>
</comment>
<comment type="subcellular location">
    <subcellularLocation>
        <location evidence="1">Cytoplasm</location>
    </subcellularLocation>
</comment>
<comment type="similarity">
    <text evidence="1">Belongs to the purine/pyrimidine phosphoribosyltransferase family.</text>
</comment>